<keyword id="KW-1204">Blood coagulation cascade activating toxin</keyword>
<keyword id="KW-0106">Calcium</keyword>
<keyword id="KW-0903">Direct protein sequencing</keyword>
<keyword id="KW-1015">Disulfide bond</keyword>
<keyword id="KW-0325">Glycoprotein</keyword>
<keyword id="KW-1199">Hemostasis impairing toxin</keyword>
<keyword id="KW-0378">Hydrolase</keyword>
<keyword id="KW-0479">Metal-binding</keyword>
<keyword id="KW-0482">Metalloprotease</keyword>
<keyword id="KW-1201">Platelet aggregation inhibiting toxin</keyword>
<keyword id="KW-0645">Protease</keyword>
<keyword id="KW-0655">Prothrombin activator</keyword>
<keyword id="KW-0964">Secreted</keyword>
<keyword id="KW-0732">Signal</keyword>
<keyword id="KW-0800">Toxin</keyword>
<keyword id="KW-0862">Zinc</keyword>
<keyword id="KW-0865">Zymogen</keyword>
<accession>Q8UVG0</accession>
<organism>
    <name type="scientific">Bothrops erythromelas</name>
    <name type="common">Caatinga lance head</name>
    <dbReference type="NCBI Taxonomy" id="44710"/>
    <lineage>
        <taxon>Eukaryota</taxon>
        <taxon>Metazoa</taxon>
        <taxon>Chordata</taxon>
        <taxon>Craniata</taxon>
        <taxon>Vertebrata</taxon>
        <taxon>Euteleostomi</taxon>
        <taxon>Lepidosauria</taxon>
        <taxon>Squamata</taxon>
        <taxon>Bifurcata</taxon>
        <taxon>Unidentata</taxon>
        <taxon>Episquamata</taxon>
        <taxon>Toxicofera</taxon>
        <taxon>Serpentes</taxon>
        <taxon>Colubroidea</taxon>
        <taxon>Viperidae</taxon>
        <taxon>Crotalinae</taxon>
        <taxon>Bothrops</taxon>
    </lineage>
</organism>
<proteinExistence type="evidence at protein level"/>
<feature type="signal peptide" evidence="2">
    <location>
        <begin position="1"/>
        <end position="20"/>
    </location>
</feature>
<feature type="propeptide" id="PRO_0000326258" evidence="6">
    <location>
        <begin position="21"/>
        <end position="187"/>
    </location>
</feature>
<feature type="chain" id="PRO_0000326259" description="Zinc metalloproteinase-disintegrin-like berythractivase">
    <location>
        <begin position="188"/>
        <end position="612"/>
    </location>
</feature>
<feature type="domain" description="Peptidase M12B" evidence="4">
    <location>
        <begin position="200"/>
        <end position="396"/>
    </location>
</feature>
<feature type="domain" description="Disintegrin" evidence="3">
    <location>
        <begin position="404"/>
        <end position="490"/>
    </location>
</feature>
<feature type="short sequence motif" description="D/ECD-tripeptide">
    <location>
        <begin position="468"/>
        <end position="470"/>
    </location>
</feature>
<feature type="active site" evidence="4 5">
    <location>
        <position position="337"/>
    </location>
</feature>
<feature type="binding site" evidence="1">
    <location>
        <position position="203"/>
    </location>
    <ligand>
        <name>Ca(2+)</name>
        <dbReference type="ChEBI" id="CHEBI:29108"/>
        <label>1</label>
    </ligand>
</feature>
<feature type="binding site" evidence="1">
    <location>
        <position position="287"/>
    </location>
    <ligand>
        <name>Ca(2+)</name>
        <dbReference type="ChEBI" id="CHEBI:29108"/>
        <label>1</label>
    </ligand>
</feature>
<feature type="binding site" evidence="1">
    <location>
        <position position="336"/>
    </location>
    <ligand>
        <name>Zn(2+)</name>
        <dbReference type="ChEBI" id="CHEBI:29105"/>
        <note>catalytic</note>
    </ligand>
</feature>
<feature type="binding site" evidence="1">
    <location>
        <position position="340"/>
    </location>
    <ligand>
        <name>Zn(2+)</name>
        <dbReference type="ChEBI" id="CHEBI:29105"/>
        <note>catalytic</note>
    </ligand>
</feature>
<feature type="binding site" evidence="1">
    <location>
        <position position="346"/>
    </location>
    <ligand>
        <name>Zn(2+)</name>
        <dbReference type="ChEBI" id="CHEBI:29105"/>
        <note>catalytic</note>
    </ligand>
</feature>
<feature type="binding site" evidence="1">
    <location>
        <position position="391"/>
    </location>
    <ligand>
        <name>Ca(2+)</name>
        <dbReference type="ChEBI" id="CHEBI:29108"/>
        <label>1</label>
    </ligand>
</feature>
<feature type="binding site" evidence="1">
    <location>
        <position position="394"/>
    </location>
    <ligand>
        <name>Ca(2+)</name>
        <dbReference type="ChEBI" id="CHEBI:29108"/>
        <label>1</label>
    </ligand>
</feature>
<feature type="binding site" evidence="1">
    <location>
        <position position="406"/>
    </location>
    <ligand>
        <name>Ca(2+)</name>
        <dbReference type="ChEBI" id="CHEBI:29108"/>
        <label>2</label>
    </ligand>
</feature>
<feature type="binding site" evidence="1">
    <location>
        <position position="409"/>
    </location>
    <ligand>
        <name>Ca(2+)</name>
        <dbReference type="ChEBI" id="CHEBI:29108"/>
        <label>2</label>
    </ligand>
</feature>
<feature type="binding site" evidence="1">
    <location>
        <position position="411"/>
    </location>
    <ligand>
        <name>Ca(2+)</name>
        <dbReference type="ChEBI" id="CHEBI:29108"/>
        <label>2</label>
    </ligand>
</feature>
<feature type="binding site" evidence="1">
    <location>
        <position position="413"/>
    </location>
    <ligand>
        <name>Ca(2+)</name>
        <dbReference type="ChEBI" id="CHEBI:29108"/>
        <label>2</label>
    </ligand>
</feature>
<feature type="binding site" evidence="1">
    <location>
        <position position="416"/>
    </location>
    <ligand>
        <name>Ca(2+)</name>
        <dbReference type="ChEBI" id="CHEBI:29108"/>
        <label>2</label>
    </ligand>
</feature>
<feature type="binding site" evidence="1">
    <location>
        <position position="419"/>
    </location>
    <ligand>
        <name>Ca(2+)</name>
        <dbReference type="ChEBI" id="CHEBI:29108"/>
        <label>2</label>
    </ligand>
</feature>
<feature type="binding site" evidence="1">
    <location>
        <position position="470"/>
    </location>
    <ligand>
        <name>Ca(2+)</name>
        <dbReference type="ChEBI" id="CHEBI:29108"/>
        <label>3</label>
    </ligand>
</feature>
<feature type="binding site" evidence="1">
    <location>
        <position position="471"/>
    </location>
    <ligand>
        <name>Ca(2+)</name>
        <dbReference type="ChEBI" id="CHEBI:29108"/>
        <label>3</label>
    </ligand>
</feature>
<feature type="binding site" evidence="1">
    <location>
        <position position="473"/>
    </location>
    <ligand>
        <name>Ca(2+)</name>
        <dbReference type="ChEBI" id="CHEBI:29108"/>
        <label>3</label>
    </ligand>
</feature>
<feature type="binding site" evidence="1">
    <location>
        <position position="485"/>
    </location>
    <ligand>
        <name>Ca(2+)</name>
        <dbReference type="ChEBI" id="CHEBI:29108"/>
        <label>3</label>
    </ligand>
</feature>
<feature type="glycosylation site" description="N-linked (GlcNAc...) asparagine" evidence="2">
    <location>
        <position position="260"/>
    </location>
</feature>
<feature type="glycosylation site" description="N-linked (GlcNAc...) asparagine" evidence="2">
    <location>
        <position position="348"/>
    </location>
</feature>
<feature type="glycosylation site" description="N-linked (GlcNAc...) asparagine" evidence="2">
    <location>
        <position position="374"/>
    </location>
</feature>
<feature type="glycosylation site" description="N-linked (GlcNAc...) asparagine" evidence="2">
    <location>
        <position position="432"/>
    </location>
</feature>
<feature type="disulfide bond" evidence="1">
    <location>
        <begin position="311"/>
        <end position="391"/>
    </location>
</feature>
<feature type="disulfide bond" evidence="1">
    <location>
        <begin position="351"/>
        <end position="375"/>
    </location>
</feature>
<feature type="disulfide bond" evidence="1">
    <location>
        <begin position="353"/>
        <end position="358"/>
    </location>
</feature>
<feature type="disulfide bond" evidence="1">
    <location>
        <begin position="407"/>
        <end position="436"/>
    </location>
</feature>
<feature type="disulfide bond" evidence="1">
    <location>
        <begin position="418"/>
        <end position="431"/>
    </location>
</feature>
<feature type="disulfide bond" evidence="1">
    <location>
        <begin position="420"/>
        <end position="426"/>
    </location>
</feature>
<feature type="disulfide bond" evidence="1">
    <location>
        <begin position="430"/>
        <end position="453"/>
    </location>
</feature>
<feature type="disulfide bond" evidence="1">
    <location>
        <begin position="444"/>
        <end position="450"/>
    </location>
</feature>
<feature type="disulfide bond" evidence="1">
    <location>
        <begin position="449"/>
        <end position="475"/>
    </location>
</feature>
<feature type="disulfide bond" evidence="1">
    <location>
        <begin position="462"/>
        <end position="482"/>
    </location>
</feature>
<feature type="disulfide bond" evidence="1">
    <location>
        <begin position="469"/>
        <end position="501"/>
    </location>
</feature>
<feature type="disulfide bond" evidence="1">
    <location>
        <begin position="494"/>
        <end position="506"/>
    </location>
</feature>
<feature type="disulfide bond" evidence="1">
    <location>
        <begin position="513"/>
        <end position="563"/>
    </location>
</feature>
<feature type="disulfide bond" evidence="1">
    <location>
        <begin position="528"/>
        <end position="574"/>
    </location>
</feature>
<feature type="disulfide bond" evidence="1">
    <location>
        <begin position="541"/>
        <end position="551"/>
    </location>
</feature>
<feature type="disulfide bond" evidence="1">
    <location>
        <begin position="558"/>
        <end position="600"/>
    </location>
</feature>
<feature type="disulfide bond" evidence="1">
    <location>
        <begin position="594"/>
        <end position="605"/>
    </location>
</feature>
<protein>
    <recommendedName>
        <fullName>Zinc metalloproteinase-disintegrin-like berythractivase</fullName>
        <ecNumber>3.4.24.-</ecNumber>
    </recommendedName>
    <alternativeName>
        <fullName>Snake venom metalloproteinase</fullName>
        <shortName>SVMP</shortName>
    </alternativeName>
    <alternativeName>
        <fullName>ery1</fullName>
    </alternativeName>
</protein>
<sequence length="612" mass="68532">MIQVLLVIICLEAFPYQGSSIILESGNVNDYEVVYPRKVTALSKGAVHPKYEDAMQYEFKVNGEPVVLHLEKNKGLFSEDYSEIHYSPDGREITTYPLVEDHCYYHGRIQNDADSSASISACNGLKGHFKLQGEMYLIEPFKLPDSEAHAVFKYENVEKEDEAPKMCGVTETNWESDEPIKKASLLNLTPEQQAYLDAKKYVEFVVVLDHGMYKKYKDDLDKIKRRIYEIVNTMNEMFIPLNICVALTGLEIWSKGDKINVTSESWFTLILFTNWRGADLLKRKSHDNAQLLTNTDFDGSTIGRAHIGSMCHPYLSVGIIQDYSPVNLLVASTMAHEMGHNLGMHHDNDTCTCGAPSCVMAAAISKDPSKLFSNCSQEYQRKYLIKNRPQCLLNKPLRTDIISPPVCGNELLEVGEECDCGTPENCRDPCCNATTCKLTPGSQCVEGLCCDQCRFRKTGTECRAAKHDCDLPESCTGQSADCPMDDFQRNGHPCQNNNGYCYNGKCPTMENQCIDLVGPKATVAEDSCFKDNQKGNDYGYCRKENGKKIPCEPQDVKCGRLYCNDNSPGQNNPCKCIYFPRNEDRGMVLPGTKCADGKVCSNRHCVDVATAY</sequence>
<reference key="1">
    <citation type="journal article" date="2003" name="Biochem. J.">
        <title>A prothrombin activator from Bothrops erythromelas (jararaca-da-seca) snake venom: characterization and molecular cloning.</title>
        <authorList>
            <person name="Silva M.B."/>
            <person name="Schattner M."/>
            <person name="Ramos C.R.R."/>
            <person name="Junqueira-de-Azevedo I.L.M."/>
            <person name="Guarnieri M.C."/>
            <person name="Lazzari M.A."/>
            <person name="Sampaio C.A.M."/>
            <person name="Pozner R.G."/>
            <person name="Ventura J.S."/>
            <person name="Ho P.L."/>
            <person name="Chudzinski-Tavassi A.M."/>
        </authorList>
    </citation>
    <scope>NUCLEOTIDE SEQUENCE [MRNA]</scope>
    <scope>PROTEIN SEQUENCE OF 188-218; 400-421; 428-435; 459-486 AND 586-593</scope>
    <scope>ACTIVITY REGULATION</scope>
    <scope>BIOPHYSICOCHEMICAL PROPERTIES</scope>
    <scope>SUBUNIT</scope>
    <source>
        <tissue>Venom</tissue>
        <tissue>Venom gland</tissue>
    </source>
</reference>
<reference key="2">
    <citation type="journal article" date="2005" name="Biol. Chem.">
        <title>The snake venom metalloproteases berythractivase and jararhagin activate endothelial cells.</title>
        <authorList>
            <person name="Schattner M."/>
            <person name="Fritzen M."/>
            <person name="Ventura J.S."/>
            <person name="de Albuquerque Modesto J.C."/>
            <person name="Pozner R.G."/>
            <person name="Moura-da-Silva A.M."/>
            <person name="Chudzinski-Tavassi A.M."/>
        </authorList>
    </citation>
    <scope>FUNCTION</scope>
    <source>
        <tissue>Venom</tissue>
    </source>
</reference>
<reference key="3">
    <citation type="journal article" date="2006" name="Toxicon">
        <title>Releasing or expression modulating mediator involved in hemostasis by Berythractivase and Jararhagin (SVMPs).</title>
        <authorList>
            <person name="Pereira A.L.M."/>
            <person name="Fritzen M."/>
            <person name="Faria F."/>
            <person name="da Motta G."/>
            <person name="Chudzinski-Tavassi A.M."/>
        </authorList>
    </citation>
    <scope>FUNCTION</scope>
    <source>
        <tissue>Venom</tissue>
    </source>
</reference>
<reference key="4">
    <citation type="journal article" date="2008" name="Biochimie">
        <title>Collagen binding is a key factor for the hemorrhagic activity of snake venom metalloproteinases.</title>
        <authorList>
            <person name="Moura-da-Silva A.M."/>
            <person name="Ramos O.H.P."/>
            <person name="Baldo C."/>
            <person name="Niland S."/>
            <person name="Hansen U."/>
            <person name="Ventura J.S."/>
            <person name="Furlan S."/>
            <person name="Butera D."/>
            <person name="Della-Casa M.S."/>
            <person name="Tanjoni I."/>
            <person name="Clissa P.B."/>
            <person name="Fernandes I."/>
            <person name="Chudzinski-Tavassi A.M."/>
            <person name="Eble J.A."/>
        </authorList>
    </citation>
    <scope>FUNCTION</scope>
    <scope>3D-STRUCTURE MODELING</scope>
    <source>
        <tissue>Venom</tissue>
    </source>
</reference>
<name>VM3BE_BOTER</name>
<dbReference type="EC" id="3.4.24.-"/>
<dbReference type="EMBL" id="AF450503">
    <property type="protein sequence ID" value="AAL47169.1"/>
    <property type="molecule type" value="mRNA"/>
</dbReference>
<dbReference type="SMR" id="Q8UVG0"/>
<dbReference type="MEROPS" id="M12.142"/>
<dbReference type="GO" id="GO:0005576">
    <property type="term" value="C:extracellular region"/>
    <property type="evidence" value="ECO:0007669"/>
    <property type="project" value="UniProtKB-SubCell"/>
</dbReference>
<dbReference type="GO" id="GO:0005886">
    <property type="term" value="C:plasma membrane"/>
    <property type="evidence" value="ECO:0007669"/>
    <property type="project" value="TreeGrafter"/>
</dbReference>
<dbReference type="GO" id="GO:0046872">
    <property type="term" value="F:metal ion binding"/>
    <property type="evidence" value="ECO:0007669"/>
    <property type="project" value="UniProtKB-KW"/>
</dbReference>
<dbReference type="GO" id="GO:0004222">
    <property type="term" value="F:metalloendopeptidase activity"/>
    <property type="evidence" value="ECO:0007669"/>
    <property type="project" value="InterPro"/>
</dbReference>
<dbReference type="GO" id="GO:0016504">
    <property type="term" value="F:peptidase activator activity"/>
    <property type="evidence" value="ECO:0007669"/>
    <property type="project" value="UniProtKB-KW"/>
</dbReference>
<dbReference type="GO" id="GO:0090729">
    <property type="term" value="F:toxin activity"/>
    <property type="evidence" value="ECO:0007669"/>
    <property type="project" value="UniProtKB-KW"/>
</dbReference>
<dbReference type="GO" id="GO:0006508">
    <property type="term" value="P:proteolysis"/>
    <property type="evidence" value="ECO:0007669"/>
    <property type="project" value="UniProtKB-KW"/>
</dbReference>
<dbReference type="CDD" id="cd04269">
    <property type="entry name" value="ZnMc_adamalysin_II_like"/>
    <property type="match status" value="1"/>
</dbReference>
<dbReference type="FunFam" id="3.40.390.10:FF:000002">
    <property type="entry name" value="Disintegrin and metalloproteinase domain-containing protein 22"/>
    <property type="match status" value="1"/>
</dbReference>
<dbReference type="FunFam" id="4.10.70.10:FF:000001">
    <property type="entry name" value="Disintegrin and metalloproteinase domain-containing protein 22"/>
    <property type="match status" value="1"/>
</dbReference>
<dbReference type="Gene3D" id="3.40.390.10">
    <property type="entry name" value="Collagenase (Catalytic Domain)"/>
    <property type="match status" value="1"/>
</dbReference>
<dbReference type="Gene3D" id="4.10.70.10">
    <property type="entry name" value="Disintegrin domain"/>
    <property type="match status" value="1"/>
</dbReference>
<dbReference type="InterPro" id="IPR006586">
    <property type="entry name" value="ADAM_Cys-rich"/>
</dbReference>
<dbReference type="InterPro" id="IPR018358">
    <property type="entry name" value="Disintegrin_CS"/>
</dbReference>
<dbReference type="InterPro" id="IPR001762">
    <property type="entry name" value="Disintegrin_dom"/>
</dbReference>
<dbReference type="InterPro" id="IPR036436">
    <property type="entry name" value="Disintegrin_dom_sf"/>
</dbReference>
<dbReference type="InterPro" id="IPR024079">
    <property type="entry name" value="MetalloPept_cat_dom_sf"/>
</dbReference>
<dbReference type="InterPro" id="IPR001590">
    <property type="entry name" value="Peptidase_M12B"/>
</dbReference>
<dbReference type="InterPro" id="IPR002870">
    <property type="entry name" value="Peptidase_M12B_N"/>
</dbReference>
<dbReference type="InterPro" id="IPR034027">
    <property type="entry name" value="Reprolysin_adamalysin"/>
</dbReference>
<dbReference type="PANTHER" id="PTHR11905">
    <property type="entry name" value="ADAM A DISINTEGRIN AND METALLOPROTEASE DOMAIN"/>
    <property type="match status" value="1"/>
</dbReference>
<dbReference type="PANTHER" id="PTHR11905:SF32">
    <property type="entry name" value="DISINTEGRIN AND METALLOPROTEINASE DOMAIN-CONTAINING PROTEIN 28"/>
    <property type="match status" value="1"/>
</dbReference>
<dbReference type="Pfam" id="PF08516">
    <property type="entry name" value="ADAM_CR"/>
    <property type="match status" value="1"/>
</dbReference>
<dbReference type="Pfam" id="PF00200">
    <property type="entry name" value="Disintegrin"/>
    <property type="match status" value="1"/>
</dbReference>
<dbReference type="Pfam" id="PF01562">
    <property type="entry name" value="Pep_M12B_propep"/>
    <property type="match status" value="1"/>
</dbReference>
<dbReference type="Pfam" id="PF01421">
    <property type="entry name" value="Reprolysin"/>
    <property type="match status" value="1"/>
</dbReference>
<dbReference type="PRINTS" id="PR00289">
    <property type="entry name" value="DISINTEGRIN"/>
</dbReference>
<dbReference type="SMART" id="SM00608">
    <property type="entry name" value="ACR"/>
    <property type="match status" value="1"/>
</dbReference>
<dbReference type="SMART" id="SM00050">
    <property type="entry name" value="DISIN"/>
    <property type="match status" value="1"/>
</dbReference>
<dbReference type="SUPFAM" id="SSF57552">
    <property type="entry name" value="Blood coagulation inhibitor (disintegrin)"/>
    <property type="match status" value="1"/>
</dbReference>
<dbReference type="SUPFAM" id="SSF55486">
    <property type="entry name" value="Metalloproteases ('zincins'), catalytic domain"/>
    <property type="match status" value="1"/>
</dbReference>
<dbReference type="PROSITE" id="PS50215">
    <property type="entry name" value="ADAM_MEPRO"/>
    <property type="match status" value="1"/>
</dbReference>
<dbReference type="PROSITE" id="PS00427">
    <property type="entry name" value="DISINTEGRIN_1"/>
    <property type="match status" value="1"/>
</dbReference>
<dbReference type="PROSITE" id="PS50214">
    <property type="entry name" value="DISINTEGRIN_2"/>
    <property type="match status" value="1"/>
</dbReference>
<dbReference type="PROSITE" id="PS00142">
    <property type="entry name" value="ZINC_PROTEASE"/>
    <property type="match status" value="1"/>
</dbReference>
<comment type="function">
    <text evidence="7 8 9">Potent activator of prothrombin (F2). Does not elicit any hemorrhagic response. Barely inhibits collagen-induced platelet aggregation. Binds neither collagen, nor the jararhagin monoclonal antibody MAJar3. Hydrolyzes the Aalpha-chain of fibrin and fibrinogen, without affecting the Bbeta- and gamma-chains. Is capable of triggering endothelial pro-inflammatory and procoagulant cell responses, but fails to trigger apoptosis. Induces von Willebrand factor release, and the expression of both ICAM1 and E-selectin (SELE) (without increase in VCAM1) in endothelial cells (HUVEC). Is also able to up-regulate the synthesis of the coagulation factor TF (F3). Enhances nitric oxide (NO) generation, prostacyclin production and interleukin-8 release.</text>
</comment>
<comment type="cofactor">
    <cofactor evidence="1">
        <name>Zn(2+)</name>
        <dbReference type="ChEBI" id="CHEBI:29105"/>
    </cofactor>
    <text evidence="1">Binds 1 zinc ion per subunit.</text>
</comment>
<comment type="activity regulation">
    <text evidence="6">Inhibited by EDTA and o-phenanthroline. Not inhibited by PMSF, benzamidine, irreversible serine-proteinase inhibitors and cysteine proteinase inhibitor E-64.</text>
</comment>
<comment type="biophysicochemical properties">
    <phDependence>
        <text evidence="6">Optimum pH is 8.0-9.0.</text>
    </phDependence>
</comment>
<comment type="subunit">
    <text evidence="6">Monomer.</text>
</comment>
<comment type="subcellular location">
    <subcellularLocation>
        <location>Secreted</location>
    </subcellularLocation>
</comment>
<comment type="tissue specificity">
    <text>Expressed by the venom gland.</text>
</comment>
<comment type="PTM">
    <text evidence="10">Highly glycosylated.</text>
</comment>
<comment type="similarity">
    <text evidence="10">Belongs to the venom metalloproteinase (M12B) family. P-III subfamily. P-IIIa sub-subfamily.</text>
</comment>
<evidence type="ECO:0000250" key="1"/>
<evidence type="ECO:0000255" key="2"/>
<evidence type="ECO:0000255" key="3">
    <source>
        <dbReference type="PROSITE-ProRule" id="PRU00068"/>
    </source>
</evidence>
<evidence type="ECO:0000255" key="4">
    <source>
        <dbReference type="PROSITE-ProRule" id="PRU00276"/>
    </source>
</evidence>
<evidence type="ECO:0000255" key="5">
    <source>
        <dbReference type="PROSITE-ProRule" id="PRU10095"/>
    </source>
</evidence>
<evidence type="ECO:0000269" key="6">
    <source>
    </source>
</evidence>
<evidence type="ECO:0000269" key="7">
    <source>
    </source>
</evidence>
<evidence type="ECO:0000269" key="8">
    <source>
    </source>
</evidence>
<evidence type="ECO:0000269" key="9">
    <source>
    </source>
</evidence>
<evidence type="ECO:0000305" key="10"/>